<proteinExistence type="inferred from homology"/>
<reference key="1">
    <citation type="journal article" date="2002" name="Nature">
        <title>Sequence and analysis of rice chromosome 4.</title>
        <authorList>
            <person name="Feng Q."/>
            <person name="Zhang Y."/>
            <person name="Hao P."/>
            <person name="Wang S."/>
            <person name="Fu G."/>
            <person name="Huang Y."/>
            <person name="Li Y."/>
            <person name="Zhu J."/>
            <person name="Liu Y."/>
            <person name="Hu X."/>
            <person name="Jia P."/>
            <person name="Zhang Y."/>
            <person name="Zhao Q."/>
            <person name="Ying K."/>
            <person name="Yu S."/>
            <person name="Tang Y."/>
            <person name="Weng Q."/>
            <person name="Zhang L."/>
            <person name="Lu Y."/>
            <person name="Mu J."/>
            <person name="Lu Y."/>
            <person name="Zhang L.S."/>
            <person name="Yu Z."/>
            <person name="Fan D."/>
            <person name="Liu X."/>
            <person name="Lu T."/>
            <person name="Li C."/>
            <person name="Wu Y."/>
            <person name="Sun T."/>
            <person name="Lei H."/>
            <person name="Li T."/>
            <person name="Hu H."/>
            <person name="Guan J."/>
            <person name="Wu M."/>
            <person name="Zhang R."/>
            <person name="Zhou B."/>
            <person name="Chen Z."/>
            <person name="Chen L."/>
            <person name="Jin Z."/>
            <person name="Wang R."/>
            <person name="Yin H."/>
            <person name="Cai Z."/>
            <person name="Ren S."/>
            <person name="Lv G."/>
            <person name="Gu W."/>
            <person name="Zhu G."/>
            <person name="Tu Y."/>
            <person name="Jia J."/>
            <person name="Zhang Y."/>
            <person name="Chen J."/>
            <person name="Kang H."/>
            <person name="Chen X."/>
            <person name="Shao C."/>
            <person name="Sun Y."/>
            <person name="Hu Q."/>
            <person name="Zhang X."/>
            <person name="Zhang W."/>
            <person name="Wang L."/>
            <person name="Ding C."/>
            <person name="Sheng H."/>
            <person name="Gu J."/>
            <person name="Chen S."/>
            <person name="Ni L."/>
            <person name="Zhu F."/>
            <person name="Chen W."/>
            <person name="Lan L."/>
            <person name="Lai Y."/>
            <person name="Cheng Z."/>
            <person name="Gu M."/>
            <person name="Jiang J."/>
            <person name="Li J."/>
            <person name="Hong G."/>
            <person name="Xue Y."/>
            <person name="Han B."/>
        </authorList>
    </citation>
    <scope>NUCLEOTIDE SEQUENCE [LARGE SCALE GENOMIC DNA]</scope>
    <source>
        <strain>cv. Guang-Lu-Ai No.4</strain>
    </source>
</reference>
<reference key="2">
    <citation type="journal article" date="2005" name="PLoS Biol.">
        <title>The genomes of Oryza sativa: a history of duplications.</title>
        <authorList>
            <person name="Yu J."/>
            <person name="Wang J."/>
            <person name="Lin W."/>
            <person name="Li S."/>
            <person name="Li H."/>
            <person name="Zhou J."/>
            <person name="Ni P."/>
            <person name="Dong W."/>
            <person name="Hu S."/>
            <person name="Zeng C."/>
            <person name="Zhang J."/>
            <person name="Zhang Y."/>
            <person name="Li R."/>
            <person name="Xu Z."/>
            <person name="Li S."/>
            <person name="Li X."/>
            <person name="Zheng H."/>
            <person name="Cong L."/>
            <person name="Lin L."/>
            <person name="Yin J."/>
            <person name="Geng J."/>
            <person name="Li G."/>
            <person name="Shi J."/>
            <person name="Liu J."/>
            <person name="Lv H."/>
            <person name="Li J."/>
            <person name="Wang J."/>
            <person name="Deng Y."/>
            <person name="Ran L."/>
            <person name="Shi X."/>
            <person name="Wang X."/>
            <person name="Wu Q."/>
            <person name="Li C."/>
            <person name="Ren X."/>
            <person name="Wang J."/>
            <person name="Wang X."/>
            <person name="Li D."/>
            <person name="Liu D."/>
            <person name="Zhang X."/>
            <person name="Ji Z."/>
            <person name="Zhao W."/>
            <person name="Sun Y."/>
            <person name="Zhang Z."/>
            <person name="Bao J."/>
            <person name="Han Y."/>
            <person name="Dong L."/>
            <person name="Ji J."/>
            <person name="Chen P."/>
            <person name="Wu S."/>
            <person name="Liu J."/>
            <person name="Xiao Y."/>
            <person name="Bu D."/>
            <person name="Tan J."/>
            <person name="Yang L."/>
            <person name="Ye C."/>
            <person name="Zhang J."/>
            <person name="Xu J."/>
            <person name="Zhou Y."/>
            <person name="Yu Y."/>
            <person name="Zhang B."/>
            <person name="Zhuang S."/>
            <person name="Wei H."/>
            <person name="Liu B."/>
            <person name="Lei M."/>
            <person name="Yu H."/>
            <person name="Li Y."/>
            <person name="Xu H."/>
            <person name="Wei S."/>
            <person name="He X."/>
            <person name="Fang L."/>
            <person name="Zhang Z."/>
            <person name="Zhang Y."/>
            <person name="Huang X."/>
            <person name="Su Z."/>
            <person name="Tong W."/>
            <person name="Li J."/>
            <person name="Tong Z."/>
            <person name="Li S."/>
            <person name="Ye J."/>
            <person name="Wang L."/>
            <person name="Fang L."/>
            <person name="Lei T."/>
            <person name="Chen C.-S."/>
            <person name="Chen H.-C."/>
            <person name="Xu Z."/>
            <person name="Li H."/>
            <person name="Huang H."/>
            <person name="Zhang F."/>
            <person name="Xu H."/>
            <person name="Li N."/>
            <person name="Zhao C."/>
            <person name="Li S."/>
            <person name="Dong L."/>
            <person name="Huang Y."/>
            <person name="Li L."/>
            <person name="Xi Y."/>
            <person name="Qi Q."/>
            <person name="Li W."/>
            <person name="Zhang B."/>
            <person name="Hu W."/>
            <person name="Zhang Y."/>
            <person name="Tian X."/>
            <person name="Jiao Y."/>
            <person name="Liang X."/>
            <person name="Jin J."/>
            <person name="Gao L."/>
            <person name="Zheng W."/>
            <person name="Hao B."/>
            <person name="Liu S.-M."/>
            <person name="Wang W."/>
            <person name="Yuan L."/>
            <person name="Cao M."/>
            <person name="McDermott J."/>
            <person name="Samudrala R."/>
            <person name="Wang J."/>
            <person name="Wong G.K.-S."/>
            <person name="Yang H."/>
        </authorList>
    </citation>
    <scope>NUCLEOTIDE SEQUENCE [LARGE SCALE GENOMIC DNA]</scope>
    <source>
        <strain>cv. 93-11</strain>
    </source>
</reference>
<sequence>MELITNVSEYEQLAKQKLPKMIYDYYASGAEDQWTLKENREAFSRILFRPRILIDVSRINMATNVLGFNISMPIMIAPSAMQKMAHPEGELATARAASAAGTIMTLSSWSTSSVEEVNSAAPGIRFFQLYVYKDRNIVRQLVRRAELAGFKAIALTVDTPRLGRREADIKNRFNLPPHLVLKNFEALDLGKMDKTNDSGLASYVASQVDRSLSWTDVKWLQTITSLPILVKGVMTAEDTRLAVESGAAGIIVSNHGARQLDYVPATISCLEEVVREAKGRLPVFLDGGVRRGTDVFKALALGASGVFIGRPVLFSLAVDGEAGVRKVLQMLRDELELTMALSGCTSLAEITRNHVITDSDRIRRSRL</sequence>
<name>GLO3_ORYSI</name>
<evidence type="ECO:0000250" key="1">
    <source>
        <dbReference type="UniProtKB" id="P05414"/>
    </source>
</evidence>
<evidence type="ECO:0000250" key="2">
    <source>
        <dbReference type="UniProtKB" id="Q9UJM8"/>
    </source>
</evidence>
<evidence type="ECO:0000255" key="3"/>
<evidence type="ECO:0000255" key="4">
    <source>
        <dbReference type="PROSITE-ProRule" id="PRU00683"/>
    </source>
</evidence>
<organism>
    <name type="scientific">Oryza sativa subsp. indica</name>
    <name type="common">Rice</name>
    <dbReference type="NCBI Taxonomy" id="39946"/>
    <lineage>
        <taxon>Eukaryota</taxon>
        <taxon>Viridiplantae</taxon>
        <taxon>Streptophyta</taxon>
        <taxon>Embryophyta</taxon>
        <taxon>Tracheophyta</taxon>
        <taxon>Spermatophyta</taxon>
        <taxon>Magnoliopsida</taxon>
        <taxon>Liliopsida</taxon>
        <taxon>Poales</taxon>
        <taxon>Poaceae</taxon>
        <taxon>BOP clade</taxon>
        <taxon>Oryzoideae</taxon>
        <taxon>Oryzeae</taxon>
        <taxon>Oryzinae</taxon>
        <taxon>Oryza</taxon>
        <taxon>Oryza sativa</taxon>
    </lineage>
</organism>
<keyword id="KW-0285">Flavoprotein</keyword>
<keyword id="KW-0288">FMN</keyword>
<keyword id="KW-0323">Glycolate pathway</keyword>
<keyword id="KW-0560">Oxidoreductase</keyword>
<keyword id="KW-0576">Peroxisome</keyword>
<keyword id="KW-0601">Photorespiration</keyword>
<keyword id="KW-1185">Reference proteome</keyword>
<comment type="function">
    <text evidence="1">Catalyzes the oxidation of glycolate to glyoxylate, with a reduction of O2 to H2O2. Is a key enzyme in photorespiration in green plants.</text>
</comment>
<comment type="catalytic activity">
    <reaction evidence="1">
        <text>glycolate + O2 = glyoxylate + H2O2</text>
        <dbReference type="Rhea" id="RHEA:25311"/>
        <dbReference type="ChEBI" id="CHEBI:15379"/>
        <dbReference type="ChEBI" id="CHEBI:16240"/>
        <dbReference type="ChEBI" id="CHEBI:29805"/>
        <dbReference type="ChEBI" id="CHEBI:36655"/>
        <dbReference type="EC" id="1.1.3.15"/>
    </reaction>
    <physiologicalReaction direction="left-to-right" evidence="1">
        <dbReference type="Rhea" id="RHEA:25312"/>
    </physiologicalReaction>
</comment>
<comment type="cofactor">
    <cofactor evidence="1">
        <name>FMN</name>
        <dbReference type="ChEBI" id="CHEBI:58210"/>
    </cofactor>
    <text evidence="1">Binds 1 FMN per subunit.</text>
</comment>
<comment type="pathway">
    <text evidence="1">Photosynthesis; photorespiration; glycine from 2-phosphoglycolate: step 2/3.</text>
</comment>
<comment type="subunit">
    <text evidence="1">Homotetramer.</text>
</comment>
<comment type="subcellular location">
    <subcellularLocation>
        <location evidence="1">Peroxisome</location>
    </subcellularLocation>
</comment>
<comment type="similarity">
    <text evidence="4">Belongs to the FMN-dependent alpha-hydroxy acid dehydrogenase family.</text>
</comment>
<feature type="chain" id="PRO_0000403414" description="Glycolate oxidase 3">
    <location>
        <begin position="1"/>
        <end position="367"/>
    </location>
</feature>
<feature type="domain" description="FMN hydroxy acid dehydrogenase" evidence="4">
    <location>
        <begin position="1"/>
        <end position="360"/>
    </location>
</feature>
<feature type="short sequence motif" description="Microbody targeting signal" evidence="3">
    <location>
        <begin position="365"/>
        <end position="367"/>
    </location>
</feature>
<feature type="active site" description="Proton acceptor" evidence="1">
    <location>
        <position position="255"/>
    </location>
</feature>
<feature type="binding site" evidence="2">
    <location>
        <position position="25"/>
    </location>
    <ligand>
        <name>glyoxylate</name>
        <dbReference type="ChEBI" id="CHEBI:36655"/>
    </ligand>
</feature>
<feature type="binding site" evidence="1">
    <location>
        <begin position="78"/>
        <end position="80"/>
    </location>
    <ligand>
        <name>FMN</name>
        <dbReference type="ChEBI" id="CHEBI:58210"/>
    </ligand>
</feature>
<feature type="binding site" evidence="1">
    <location>
        <position position="107"/>
    </location>
    <ligand>
        <name>FMN</name>
        <dbReference type="ChEBI" id="CHEBI:58210"/>
    </ligand>
</feature>
<feature type="binding site" evidence="1">
    <location>
        <begin position="128"/>
        <end position="130"/>
    </location>
    <ligand>
        <name>FMN</name>
        <dbReference type="ChEBI" id="CHEBI:58210"/>
    </ligand>
</feature>
<feature type="binding site" evidence="2">
    <location>
        <position position="130"/>
    </location>
    <ligand>
        <name>glyoxylate</name>
        <dbReference type="ChEBI" id="CHEBI:36655"/>
    </ligand>
</feature>
<feature type="binding site" evidence="1">
    <location>
        <position position="156"/>
    </location>
    <ligand>
        <name>FMN</name>
        <dbReference type="ChEBI" id="CHEBI:58210"/>
    </ligand>
</feature>
<feature type="binding site" evidence="2">
    <location>
        <position position="165"/>
    </location>
    <ligand>
        <name>glyoxylate</name>
        <dbReference type="ChEBI" id="CHEBI:36655"/>
    </ligand>
</feature>
<feature type="binding site" evidence="1">
    <location>
        <position position="231"/>
    </location>
    <ligand>
        <name>FMN</name>
        <dbReference type="ChEBI" id="CHEBI:58210"/>
    </ligand>
</feature>
<feature type="binding site" evidence="1">
    <location>
        <position position="253"/>
    </location>
    <ligand>
        <name>FMN</name>
        <dbReference type="ChEBI" id="CHEBI:58210"/>
    </ligand>
</feature>
<feature type="binding site" evidence="2">
    <location>
        <position position="255"/>
    </location>
    <ligand>
        <name>glyoxylate</name>
        <dbReference type="ChEBI" id="CHEBI:36655"/>
    </ligand>
</feature>
<feature type="binding site" evidence="2">
    <location>
        <position position="258"/>
    </location>
    <ligand>
        <name>glyoxylate</name>
        <dbReference type="ChEBI" id="CHEBI:36655"/>
    </ligand>
</feature>
<feature type="binding site" evidence="1">
    <location>
        <begin position="286"/>
        <end position="290"/>
    </location>
    <ligand>
        <name>FMN</name>
        <dbReference type="ChEBI" id="CHEBI:58210"/>
    </ligand>
</feature>
<feature type="binding site" evidence="1">
    <location>
        <begin position="309"/>
        <end position="310"/>
    </location>
    <ligand>
        <name>FMN</name>
        <dbReference type="ChEBI" id="CHEBI:58210"/>
    </ligand>
</feature>
<feature type="site" description="Involved in determining the substrate specificity of glycolate oxidase" evidence="1">
    <location>
        <position position="109"/>
    </location>
</feature>
<accession>B8AUI3</accession>
<accession>Q01KC3</accession>
<dbReference type="EC" id="1.1.3.15" evidence="1"/>
<dbReference type="EMBL" id="CR855144">
    <property type="protein sequence ID" value="CAH66796.1"/>
    <property type="molecule type" value="Genomic_DNA"/>
</dbReference>
<dbReference type="EMBL" id="CM000129">
    <property type="protein sequence ID" value="EEC78043.1"/>
    <property type="molecule type" value="Genomic_DNA"/>
</dbReference>
<dbReference type="SMR" id="B8AUI3"/>
<dbReference type="STRING" id="39946.B8AUI3"/>
<dbReference type="EnsemblPlants" id="BGIOSGA017163-TA">
    <property type="protein sequence ID" value="BGIOSGA017163-PA"/>
    <property type="gene ID" value="BGIOSGA017163"/>
</dbReference>
<dbReference type="EnsemblPlants" id="OsGoSa_04g0026670.02">
    <property type="protein sequence ID" value="OsGoSa_04g0026670.02"/>
    <property type="gene ID" value="OsGoSa_04g0026670"/>
</dbReference>
<dbReference type="EnsemblPlants" id="OsIR64_04g0026410.01">
    <property type="protein sequence ID" value="OsIR64_04g0026410.01"/>
    <property type="gene ID" value="OsIR64_04g0026410"/>
</dbReference>
<dbReference type="EnsemblPlants" id="OsLima_04g0026780.01">
    <property type="protein sequence ID" value="OsLima_04g0026780.01"/>
    <property type="gene ID" value="OsLima_04g0026780"/>
</dbReference>
<dbReference type="EnsemblPlants" id="OsLiXu_04g0027150.01">
    <property type="protein sequence ID" value="OsLiXu_04g0027150.01"/>
    <property type="gene ID" value="OsLiXu_04g0027150"/>
</dbReference>
<dbReference type="Gramene" id="BGIOSGA017163-TA">
    <property type="protein sequence ID" value="BGIOSGA017163-PA"/>
    <property type="gene ID" value="BGIOSGA017163"/>
</dbReference>
<dbReference type="Gramene" id="OsGoSa_04g0026670.02">
    <property type="protein sequence ID" value="OsGoSa_04g0026670.02"/>
    <property type="gene ID" value="OsGoSa_04g0026670"/>
</dbReference>
<dbReference type="Gramene" id="OsIR64_04g0026410.01">
    <property type="protein sequence ID" value="OsIR64_04g0026410.01"/>
    <property type="gene ID" value="OsIR64_04g0026410"/>
</dbReference>
<dbReference type="Gramene" id="OsLima_04g0026780.01">
    <property type="protein sequence ID" value="OsLima_04g0026780.01"/>
    <property type="gene ID" value="OsLima_04g0026780"/>
</dbReference>
<dbReference type="Gramene" id="OsLiXu_04g0027150.01">
    <property type="protein sequence ID" value="OsLiXu_04g0027150.01"/>
    <property type="gene ID" value="OsLiXu_04g0027150"/>
</dbReference>
<dbReference type="HOGENOM" id="CLU_020639_0_0_1"/>
<dbReference type="OMA" id="WFQLYWL"/>
<dbReference type="OrthoDB" id="25826at2759"/>
<dbReference type="UniPathway" id="UPA00951">
    <property type="reaction ID" value="UER00912"/>
</dbReference>
<dbReference type="Proteomes" id="UP000007015">
    <property type="component" value="Chromosome 4"/>
</dbReference>
<dbReference type="GO" id="GO:0005777">
    <property type="term" value="C:peroxisome"/>
    <property type="evidence" value="ECO:0000250"/>
    <property type="project" value="UniProtKB"/>
</dbReference>
<dbReference type="GO" id="GO:0003973">
    <property type="term" value="F:(S)-2-hydroxy-acid oxidase activity"/>
    <property type="evidence" value="ECO:0000250"/>
    <property type="project" value="UniProtKB"/>
</dbReference>
<dbReference type="GO" id="GO:0010181">
    <property type="term" value="F:FMN binding"/>
    <property type="evidence" value="ECO:0007669"/>
    <property type="project" value="InterPro"/>
</dbReference>
<dbReference type="GO" id="GO:0009854">
    <property type="term" value="P:oxidative photosynthetic carbon pathway"/>
    <property type="evidence" value="ECO:0007669"/>
    <property type="project" value="UniProtKB-KW"/>
</dbReference>
<dbReference type="GO" id="GO:0009853">
    <property type="term" value="P:photorespiration"/>
    <property type="evidence" value="ECO:0000250"/>
    <property type="project" value="UniProtKB"/>
</dbReference>
<dbReference type="GO" id="GO:0010109">
    <property type="term" value="P:regulation of photosynthesis"/>
    <property type="evidence" value="ECO:0000250"/>
    <property type="project" value="UniProtKB"/>
</dbReference>
<dbReference type="GO" id="GO:0051707">
    <property type="term" value="P:response to other organism"/>
    <property type="evidence" value="ECO:0007669"/>
    <property type="project" value="UniProtKB-ARBA"/>
</dbReference>
<dbReference type="GO" id="GO:0046718">
    <property type="term" value="P:symbiont entry into host cell"/>
    <property type="evidence" value="ECO:0000250"/>
    <property type="project" value="UniProtKB"/>
</dbReference>
<dbReference type="CDD" id="cd02809">
    <property type="entry name" value="alpha_hydroxyacid_oxid_FMN"/>
    <property type="match status" value="1"/>
</dbReference>
<dbReference type="FunFam" id="3.20.20.70:FF:000063">
    <property type="entry name" value="peroxisomal (S)-2-hydroxy-acid oxidase GLO1"/>
    <property type="match status" value="1"/>
</dbReference>
<dbReference type="Gene3D" id="3.20.20.70">
    <property type="entry name" value="Aldolase class I"/>
    <property type="match status" value="1"/>
</dbReference>
<dbReference type="InterPro" id="IPR013785">
    <property type="entry name" value="Aldolase_TIM"/>
</dbReference>
<dbReference type="InterPro" id="IPR012133">
    <property type="entry name" value="Alpha-hydoxy_acid_DH_FMN"/>
</dbReference>
<dbReference type="InterPro" id="IPR000262">
    <property type="entry name" value="FMN-dep_DH"/>
</dbReference>
<dbReference type="InterPro" id="IPR037396">
    <property type="entry name" value="FMN_HAD"/>
</dbReference>
<dbReference type="InterPro" id="IPR008259">
    <property type="entry name" value="FMN_hydac_DH_AS"/>
</dbReference>
<dbReference type="PANTHER" id="PTHR10578:SF70">
    <property type="entry name" value="GLYCOLATE OXIDASE 3"/>
    <property type="match status" value="1"/>
</dbReference>
<dbReference type="PANTHER" id="PTHR10578">
    <property type="entry name" value="S -2-HYDROXY-ACID OXIDASE-RELATED"/>
    <property type="match status" value="1"/>
</dbReference>
<dbReference type="Pfam" id="PF01070">
    <property type="entry name" value="FMN_dh"/>
    <property type="match status" value="1"/>
</dbReference>
<dbReference type="PIRSF" id="PIRSF000138">
    <property type="entry name" value="Al-hdrx_acd_dh"/>
    <property type="match status" value="1"/>
</dbReference>
<dbReference type="SUPFAM" id="SSF51395">
    <property type="entry name" value="FMN-linked oxidoreductases"/>
    <property type="match status" value="1"/>
</dbReference>
<dbReference type="PROSITE" id="PS00557">
    <property type="entry name" value="FMN_HYDROXY_ACID_DH_1"/>
    <property type="match status" value="1"/>
</dbReference>
<dbReference type="PROSITE" id="PS51349">
    <property type="entry name" value="FMN_HYDROXY_ACID_DH_2"/>
    <property type="match status" value="1"/>
</dbReference>
<protein>
    <recommendedName>
        <fullName>Glycolate oxidase 3</fullName>
        <shortName>GOX 3</shortName>
        <shortName>OsGLO3</shortName>
        <ecNumber evidence="1">1.1.3.15</ecNumber>
    </recommendedName>
    <alternativeName>
        <fullName>Peroxisomal (S)-2-hydroxy-acid oxidase GLO3</fullName>
    </alternativeName>
    <alternativeName>
        <fullName>Short chain alpha-hydroxy acid oxidase GLO3</fullName>
    </alternativeName>
</protein>
<gene>
    <name type="primary">GLO3</name>
    <name type="ORF">H0215F08.7</name>
    <name type="ORF">OsI_17479</name>
</gene>